<evidence type="ECO:0000255" key="1">
    <source>
        <dbReference type="HAMAP-Rule" id="MF_00692"/>
    </source>
</evidence>
<keyword id="KW-0067">ATP-binding</keyword>
<keyword id="KW-0460">Magnesium</keyword>
<keyword id="KW-0464">Manganese</keyword>
<keyword id="KW-0479">Metal-binding</keyword>
<keyword id="KW-0547">Nucleotide-binding</keyword>
<keyword id="KW-0548">Nucleotidyltransferase</keyword>
<keyword id="KW-0808">Transferase</keyword>
<proteinExistence type="inferred from homology"/>
<accession>B9JBH4</accession>
<sequence>MSSFLHDSPVLEAPPIPFDNSYARLPPQFFAEQAPTPVAAPRLIKFNSVLASELGLDAEVLERDGAAIFSGNALLPGSQPLAMAYAGHQFGGFVPQLGDGRAILLGEVIDRNGRRRDIQLKGAGPTPFSRRGDGRAALGPVLREYIVSEAMFALGIPTTRALAAVTTGQPVYREEALPGAVFTRVAASHIRVGTFQYFAARGDTDSLRILADYVVDRHYPEIKDRKNRYLALLDAVADRQAALIARWLHVGFIHGVMNTDNMTISGETIDFGPCAFMDAYDPATVFSSIDRQGRYAYANQPAIGQWNLARLGETLLPLIDPTLDTAVELANGIIKAYGERFQTYWLAGMRAKIGLATEEDSDLDLVQSLLAVMQEQEADFTLTFRRLGVLAASVDNEAAFAASFKDPLSVAPWLSLWRERLGRDPQSPAARAKAMLGVNPAFVPRNHRIEQAIAAAVEEDDFSLFEALLAVLAKPYEDQPAFAPYAEPPRPAERVLQTFCGT</sequence>
<dbReference type="EC" id="2.7.7.-" evidence="1"/>
<dbReference type="EC" id="2.7.7.108" evidence="1"/>
<dbReference type="EMBL" id="CP000628">
    <property type="protein sequence ID" value="ACM25880.1"/>
    <property type="molecule type" value="Genomic_DNA"/>
</dbReference>
<dbReference type="RefSeq" id="WP_012651139.1">
    <property type="nucleotide sequence ID" value="NC_011985.1"/>
</dbReference>
<dbReference type="SMR" id="B9JBH4"/>
<dbReference type="STRING" id="311403.Arad_1451"/>
<dbReference type="KEGG" id="ara:Arad_1451"/>
<dbReference type="eggNOG" id="COG0397">
    <property type="taxonomic scope" value="Bacteria"/>
</dbReference>
<dbReference type="HOGENOM" id="CLU_010245_4_0_5"/>
<dbReference type="Proteomes" id="UP000001600">
    <property type="component" value="Chromosome 1"/>
</dbReference>
<dbReference type="GO" id="GO:0070733">
    <property type="term" value="F:AMPylase activity"/>
    <property type="evidence" value="ECO:0007669"/>
    <property type="project" value="TreeGrafter"/>
</dbReference>
<dbReference type="GO" id="GO:0005524">
    <property type="term" value="F:ATP binding"/>
    <property type="evidence" value="ECO:0007669"/>
    <property type="project" value="UniProtKB-UniRule"/>
</dbReference>
<dbReference type="GO" id="GO:0000287">
    <property type="term" value="F:magnesium ion binding"/>
    <property type="evidence" value="ECO:0007669"/>
    <property type="project" value="UniProtKB-UniRule"/>
</dbReference>
<dbReference type="HAMAP" id="MF_00692">
    <property type="entry name" value="YdiU_SelO"/>
    <property type="match status" value="1"/>
</dbReference>
<dbReference type="InterPro" id="IPR011009">
    <property type="entry name" value="Kinase-like_dom_sf"/>
</dbReference>
<dbReference type="InterPro" id="IPR003846">
    <property type="entry name" value="SelO"/>
</dbReference>
<dbReference type="NCBIfam" id="NF000658">
    <property type="entry name" value="PRK00029.1"/>
    <property type="match status" value="1"/>
</dbReference>
<dbReference type="PANTHER" id="PTHR32057">
    <property type="entry name" value="PROTEIN ADENYLYLTRANSFERASE SELO, MITOCHONDRIAL"/>
    <property type="match status" value="1"/>
</dbReference>
<dbReference type="PANTHER" id="PTHR32057:SF14">
    <property type="entry name" value="PROTEIN ADENYLYLTRANSFERASE SELO, MITOCHONDRIAL"/>
    <property type="match status" value="1"/>
</dbReference>
<dbReference type="Pfam" id="PF02696">
    <property type="entry name" value="SelO"/>
    <property type="match status" value="1"/>
</dbReference>
<dbReference type="SUPFAM" id="SSF56112">
    <property type="entry name" value="Protein kinase-like (PK-like)"/>
    <property type="match status" value="1"/>
</dbReference>
<protein>
    <recommendedName>
        <fullName evidence="1">Protein nucleotidyltransferase YdiU</fullName>
        <ecNumber evidence="1">2.7.7.-</ecNumber>
    </recommendedName>
    <alternativeName>
        <fullName evidence="1">Protein adenylyltransferase YdiU</fullName>
        <ecNumber evidence="1">2.7.7.108</ecNumber>
    </alternativeName>
    <alternativeName>
        <fullName evidence="1">Protein uridylyltransferase YdiU</fullName>
        <ecNumber evidence="1">2.7.7.-</ecNumber>
    </alternativeName>
</protein>
<feature type="chain" id="PRO_1000200052" description="Protein nucleotidyltransferase YdiU">
    <location>
        <begin position="1"/>
        <end position="502"/>
    </location>
</feature>
<feature type="active site" description="Proton acceptor" evidence="1">
    <location>
        <position position="260"/>
    </location>
</feature>
<feature type="binding site" evidence="1">
    <location>
        <position position="98"/>
    </location>
    <ligand>
        <name>ATP</name>
        <dbReference type="ChEBI" id="CHEBI:30616"/>
    </ligand>
</feature>
<feature type="binding site" evidence="1">
    <location>
        <position position="100"/>
    </location>
    <ligand>
        <name>ATP</name>
        <dbReference type="ChEBI" id="CHEBI:30616"/>
    </ligand>
</feature>
<feature type="binding site" evidence="1">
    <location>
        <position position="101"/>
    </location>
    <ligand>
        <name>ATP</name>
        <dbReference type="ChEBI" id="CHEBI:30616"/>
    </ligand>
</feature>
<feature type="binding site" evidence="1">
    <location>
        <position position="121"/>
    </location>
    <ligand>
        <name>ATP</name>
        <dbReference type="ChEBI" id="CHEBI:30616"/>
    </ligand>
</feature>
<feature type="binding site" evidence="1">
    <location>
        <position position="133"/>
    </location>
    <ligand>
        <name>ATP</name>
        <dbReference type="ChEBI" id="CHEBI:30616"/>
    </ligand>
</feature>
<feature type="binding site" evidence="1">
    <location>
        <position position="134"/>
    </location>
    <ligand>
        <name>ATP</name>
        <dbReference type="ChEBI" id="CHEBI:30616"/>
    </ligand>
</feature>
<feature type="binding site" evidence="1">
    <location>
        <position position="184"/>
    </location>
    <ligand>
        <name>ATP</name>
        <dbReference type="ChEBI" id="CHEBI:30616"/>
    </ligand>
</feature>
<feature type="binding site" evidence="1">
    <location>
        <position position="191"/>
    </location>
    <ligand>
        <name>ATP</name>
        <dbReference type="ChEBI" id="CHEBI:30616"/>
    </ligand>
</feature>
<feature type="binding site" evidence="1">
    <location>
        <position position="261"/>
    </location>
    <ligand>
        <name>Mg(2+)</name>
        <dbReference type="ChEBI" id="CHEBI:18420"/>
    </ligand>
</feature>
<feature type="binding site" evidence="1">
    <location>
        <position position="270"/>
    </location>
    <ligand>
        <name>ATP</name>
        <dbReference type="ChEBI" id="CHEBI:30616"/>
    </ligand>
</feature>
<feature type="binding site" evidence="1">
    <location>
        <position position="270"/>
    </location>
    <ligand>
        <name>Mg(2+)</name>
        <dbReference type="ChEBI" id="CHEBI:18420"/>
    </ligand>
</feature>
<comment type="function">
    <text evidence="1">Nucleotidyltransferase involved in the post-translational modification of proteins. It can catalyze the addition of adenosine monophosphate (AMP) or uridine monophosphate (UMP) to a protein, resulting in modifications known as AMPylation and UMPylation.</text>
</comment>
<comment type="catalytic activity">
    <reaction evidence="1">
        <text>L-seryl-[protein] + ATP = 3-O-(5'-adenylyl)-L-seryl-[protein] + diphosphate</text>
        <dbReference type="Rhea" id="RHEA:58120"/>
        <dbReference type="Rhea" id="RHEA-COMP:9863"/>
        <dbReference type="Rhea" id="RHEA-COMP:15073"/>
        <dbReference type="ChEBI" id="CHEBI:29999"/>
        <dbReference type="ChEBI" id="CHEBI:30616"/>
        <dbReference type="ChEBI" id="CHEBI:33019"/>
        <dbReference type="ChEBI" id="CHEBI:142516"/>
        <dbReference type="EC" id="2.7.7.108"/>
    </reaction>
</comment>
<comment type="catalytic activity">
    <reaction evidence="1">
        <text>L-threonyl-[protein] + ATP = 3-O-(5'-adenylyl)-L-threonyl-[protein] + diphosphate</text>
        <dbReference type="Rhea" id="RHEA:54292"/>
        <dbReference type="Rhea" id="RHEA-COMP:11060"/>
        <dbReference type="Rhea" id="RHEA-COMP:13847"/>
        <dbReference type="ChEBI" id="CHEBI:30013"/>
        <dbReference type="ChEBI" id="CHEBI:30616"/>
        <dbReference type="ChEBI" id="CHEBI:33019"/>
        <dbReference type="ChEBI" id="CHEBI:138113"/>
        <dbReference type="EC" id="2.7.7.108"/>
    </reaction>
</comment>
<comment type="catalytic activity">
    <reaction evidence="1">
        <text>L-tyrosyl-[protein] + ATP = O-(5'-adenylyl)-L-tyrosyl-[protein] + diphosphate</text>
        <dbReference type="Rhea" id="RHEA:54288"/>
        <dbReference type="Rhea" id="RHEA-COMP:10136"/>
        <dbReference type="Rhea" id="RHEA-COMP:13846"/>
        <dbReference type="ChEBI" id="CHEBI:30616"/>
        <dbReference type="ChEBI" id="CHEBI:33019"/>
        <dbReference type="ChEBI" id="CHEBI:46858"/>
        <dbReference type="ChEBI" id="CHEBI:83624"/>
        <dbReference type="EC" id="2.7.7.108"/>
    </reaction>
</comment>
<comment type="catalytic activity">
    <reaction evidence="1">
        <text>L-histidyl-[protein] + UTP = N(tele)-(5'-uridylyl)-L-histidyl-[protein] + diphosphate</text>
        <dbReference type="Rhea" id="RHEA:83891"/>
        <dbReference type="Rhea" id="RHEA-COMP:9745"/>
        <dbReference type="Rhea" id="RHEA-COMP:20239"/>
        <dbReference type="ChEBI" id="CHEBI:29979"/>
        <dbReference type="ChEBI" id="CHEBI:33019"/>
        <dbReference type="ChEBI" id="CHEBI:46398"/>
        <dbReference type="ChEBI" id="CHEBI:233474"/>
    </reaction>
</comment>
<comment type="catalytic activity">
    <reaction evidence="1">
        <text>L-seryl-[protein] + UTP = O-(5'-uridylyl)-L-seryl-[protein] + diphosphate</text>
        <dbReference type="Rhea" id="RHEA:64604"/>
        <dbReference type="Rhea" id="RHEA-COMP:9863"/>
        <dbReference type="Rhea" id="RHEA-COMP:16635"/>
        <dbReference type="ChEBI" id="CHEBI:29999"/>
        <dbReference type="ChEBI" id="CHEBI:33019"/>
        <dbReference type="ChEBI" id="CHEBI:46398"/>
        <dbReference type="ChEBI" id="CHEBI:156051"/>
    </reaction>
</comment>
<comment type="catalytic activity">
    <reaction evidence="1">
        <text>L-tyrosyl-[protein] + UTP = O-(5'-uridylyl)-L-tyrosyl-[protein] + diphosphate</text>
        <dbReference type="Rhea" id="RHEA:83887"/>
        <dbReference type="Rhea" id="RHEA-COMP:10136"/>
        <dbReference type="Rhea" id="RHEA-COMP:20238"/>
        <dbReference type="ChEBI" id="CHEBI:33019"/>
        <dbReference type="ChEBI" id="CHEBI:46398"/>
        <dbReference type="ChEBI" id="CHEBI:46858"/>
        <dbReference type="ChEBI" id="CHEBI:90602"/>
    </reaction>
</comment>
<comment type="cofactor">
    <cofactor evidence="1">
        <name>Mg(2+)</name>
        <dbReference type="ChEBI" id="CHEBI:18420"/>
    </cofactor>
    <cofactor evidence="1">
        <name>Mn(2+)</name>
        <dbReference type="ChEBI" id="CHEBI:29035"/>
    </cofactor>
</comment>
<comment type="similarity">
    <text evidence="1">Belongs to the SELO family.</text>
</comment>
<reference key="1">
    <citation type="journal article" date="2009" name="J. Bacteriol.">
        <title>Genome sequences of three Agrobacterium biovars help elucidate the evolution of multichromosome genomes in bacteria.</title>
        <authorList>
            <person name="Slater S.C."/>
            <person name="Goldman B.S."/>
            <person name="Goodner B."/>
            <person name="Setubal J.C."/>
            <person name="Farrand S.K."/>
            <person name="Nester E.W."/>
            <person name="Burr T.J."/>
            <person name="Banta L."/>
            <person name="Dickerman A.W."/>
            <person name="Paulsen I."/>
            <person name="Otten L."/>
            <person name="Suen G."/>
            <person name="Welch R."/>
            <person name="Almeida N.F."/>
            <person name="Arnold F."/>
            <person name="Burton O.T."/>
            <person name="Du Z."/>
            <person name="Ewing A."/>
            <person name="Godsy E."/>
            <person name="Heisel S."/>
            <person name="Houmiel K.L."/>
            <person name="Jhaveri J."/>
            <person name="Lu J."/>
            <person name="Miller N.M."/>
            <person name="Norton S."/>
            <person name="Chen Q."/>
            <person name="Phoolcharoen W."/>
            <person name="Ohlin V."/>
            <person name="Ondrusek D."/>
            <person name="Pride N."/>
            <person name="Stricklin S.L."/>
            <person name="Sun J."/>
            <person name="Wheeler C."/>
            <person name="Wilson L."/>
            <person name="Zhu H."/>
            <person name="Wood D.W."/>
        </authorList>
    </citation>
    <scope>NUCLEOTIDE SEQUENCE [LARGE SCALE GENOMIC DNA]</scope>
    <source>
        <strain>K84 / ATCC BAA-868</strain>
    </source>
</reference>
<gene>
    <name evidence="1" type="primary">ydiU</name>
    <name evidence="1" type="synonym">selO</name>
    <name type="ordered locus">Arad_1451</name>
</gene>
<name>SELO_RHIR8</name>
<organism>
    <name type="scientific">Rhizobium rhizogenes (strain K84 / ATCC BAA-868)</name>
    <name type="common">Agrobacterium radiobacter</name>
    <dbReference type="NCBI Taxonomy" id="311403"/>
    <lineage>
        <taxon>Bacteria</taxon>
        <taxon>Pseudomonadati</taxon>
        <taxon>Pseudomonadota</taxon>
        <taxon>Alphaproteobacteria</taxon>
        <taxon>Hyphomicrobiales</taxon>
        <taxon>Rhizobiaceae</taxon>
        <taxon>Rhizobium/Agrobacterium group</taxon>
        <taxon>Rhizobium</taxon>
    </lineage>
</organism>